<reference key="1">
    <citation type="journal article" date="1989" name="Nucleic Acids Res.">
        <title>Nucleotide sequence of a gene that encodes resistance to ethidium bromide from a transferable plasmid in Staphylococcus aureus.</title>
        <authorList>
            <person name="Sasatsu M."/>
            <person name="Shima K."/>
            <person name="Shibata Y."/>
            <person name="Kono M."/>
        </authorList>
    </citation>
    <scope>NUCLEOTIDE SEQUENCE [GENOMIC DNA]</scope>
    <source>
        <strain>L20A</strain>
        <plasmid>pTZ20</plasmid>
    </source>
</reference>
<reference key="2">
    <citation type="journal article" date="1992" name="Plasmid">
        <title>A staphylococcal multidrug resistance gene product is a member of a new protein family.</title>
        <authorList>
            <person name="Grinius L."/>
            <person name="Dreguniene G."/>
            <person name="Goldberg E.B."/>
            <person name="Liao C.H."/>
            <person name="Projan S.J."/>
        </authorList>
    </citation>
    <scope>NUCLEOTIDE SEQUENCE [GENOMIC DNA]</scope>
    <scope>FUNCTION</scope>
    <source>
        <plasmid>pWBG32</plasmid>
    </source>
</reference>
<reference key="3">
    <citation type="journal article" date="1991" name="Gene">
        <title>Structure and evolution of a family of genes encoding antiseptic and disinfectant resistance in Staphylococcus aureus.</title>
        <authorList>
            <person name="Littlejohn T.G."/>
            <person name="DiBerardino D."/>
            <person name="Messerotti L.J."/>
            <person name="Spiers S.J."/>
            <person name="Skurray R.A."/>
        </authorList>
    </citation>
    <scope>NUCLEOTIDE SEQUENCE [GENOMIC DNA]</scope>
    <source>
        <plasmid>pSK89</plasmid>
    </source>
</reference>
<reference key="4">
    <citation type="journal article" date="1992" name="FEMS Microbiol. Lett.">
        <title>High-level resistance to ethidium bromide and antiseptics in Staphylococcus aureus.</title>
        <authorList>
            <person name="Sasatsu M."/>
            <person name="Shibata Y."/>
            <person name="Noguchi N."/>
            <person name="Kono M."/>
        </authorList>
    </citation>
    <scope>NUCLEOTIDE SEQUENCE [GENOMIC DNA]</scope>
    <source>
        <strain>N20</strain>
        <plasmid>pTZ22</plasmid>
    </source>
</reference>
<reference key="5">
    <citation type="submission" date="1996-02" db="EMBL/GenBank/DDBJ databases">
        <authorList>
            <person name="Moon K.H."/>
            <person name="Im S.H."/>
            <person name="Yoon S.J."/>
            <person name="Kim W.K."/>
            <person name="Shin C.K."/>
            <person name="Lee D.W."/>
        </authorList>
    </citation>
    <scope>NUCLEOTIDE SEQUENCE [GENOMIC DNA]</scope>
    <source>
        <strain>SA2</strain>
        <plasmid>pKH8</plasmid>
    </source>
</reference>
<reference key="6">
    <citation type="submission" date="1995-01" db="EMBL/GenBank/DDBJ databases">
        <authorList>
            <person name="Leelaporn A."/>
            <person name="Firth N."/>
            <person name="Paulsen I.T."/>
            <person name="Hettiaratchi A."/>
            <person name="Skurray R.A."/>
        </authorList>
    </citation>
    <scope>NUCLEOTIDE SEQUENCE [GENOMIC DNA]</scope>
</reference>
<reference key="7">
    <citation type="journal article" date="1989" name="J. Gen. Microbiol.">
        <title>Physical and biochemical characterization of the qacA gene encoding antiseptic and disinfectant resistance in Staphylococcus aureus.</title>
        <authorList>
            <person name="Tennent J.M."/>
            <person name="Lyon B.R."/>
            <person name="Midgley M."/>
            <person name="Jones I.G."/>
            <person name="Purewal A.S."/>
            <person name="Skurray R.A."/>
        </authorList>
    </citation>
    <scope>FUNCTION</scope>
</reference>
<reference key="8">
    <citation type="journal article" date="1995" name="J. Bacteriol.">
        <title>Molecular characterization of the staphylococcal multidrug resistance export protein QacC.</title>
        <authorList>
            <person name="Paulsen I.T."/>
            <person name="Brown M.H."/>
            <person name="Dunstan S.J."/>
            <person name="Skurray R.A."/>
        </authorList>
    </citation>
    <scope>FUNCTION</scope>
    <scope>ACTIVITY REGULATION</scope>
    <scope>SUBCELLULAR LOCATION</scope>
    <scope>TOPOLOGY</scope>
    <scope>MUTAGENESIS OF PRO-31; CYS-42; TYR-59 AND TRP-62</scope>
</reference>
<gene>
    <name evidence="6" type="primary">qacC</name>
    <name evidence="4 7" type="synonym">ebr</name>
    <name evidence="5" type="synonym">smr</name>
</gene>
<dbReference type="EMBL" id="M37888">
    <property type="protein sequence ID" value="AAA26666.1"/>
    <property type="molecule type" value="Genomic_DNA"/>
</dbReference>
<dbReference type="EMBL" id="X15574">
    <property type="protein sequence ID" value="CAA33598.1"/>
    <property type="molecule type" value="Genomic_DNA"/>
</dbReference>
<dbReference type="EMBL" id="M33479">
    <property type="protein sequence ID" value="AAA26668.1"/>
    <property type="molecule type" value="Genomic_DNA"/>
</dbReference>
<dbReference type="EMBL" id="M37889">
    <property type="protein sequence ID" value="AAB02114.1"/>
    <property type="molecule type" value="Genomic_DNA"/>
</dbReference>
<dbReference type="EMBL" id="X62587">
    <property type="protein sequence ID" value="CAA44471.1"/>
    <property type="molecule type" value="Genomic_DNA"/>
</dbReference>
<dbReference type="EMBL" id="X62587">
    <property type="protein sequence ID" value="CAA44472.1"/>
    <property type="molecule type" value="Genomic_DNA"/>
</dbReference>
<dbReference type="EMBL" id="U50077">
    <property type="protein sequence ID" value="AAB07747.1"/>
    <property type="molecule type" value="Genomic_DNA"/>
</dbReference>
<dbReference type="EMBL" id="U15783">
    <property type="protein sequence ID" value="AAA60379.1"/>
    <property type="molecule type" value="Genomic_DNA"/>
</dbReference>
<dbReference type="PIR" id="JQ1439">
    <property type="entry name" value="JQ1439"/>
</dbReference>
<dbReference type="RefSeq" id="NP_863640.1">
    <property type="nucleotide sequence ID" value="NC_005024.1"/>
</dbReference>
<dbReference type="RefSeq" id="NP_878005.1">
    <property type="nucleotide sequence ID" value="NC_005054.1"/>
</dbReference>
<dbReference type="RefSeq" id="WP_001146389.1">
    <property type="nucleotide sequence ID" value="NZ_WWCF01000015.1"/>
</dbReference>
<dbReference type="RefSeq" id="YP_002790936.1">
    <property type="nucleotide sequence ID" value="NC_012547.1"/>
</dbReference>
<dbReference type="RefSeq" id="YP_006938404.1">
    <property type="nucleotide sequence ID" value="NC_013339.1"/>
</dbReference>
<dbReference type="RefSeq" id="YP_006938512.1">
    <property type="nucleotide sequence ID" value="NC_013342.1"/>
</dbReference>
<dbReference type="RefSeq" id="YP_006938611.1">
    <property type="nucleotide sequence ID" value="NC_013344.1"/>
</dbReference>
<dbReference type="RefSeq" id="YP_006938730.1">
    <property type="nucleotide sequence ID" value="NC_013350.1"/>
</dbReference>
<dbReference type="RefSeq" id="YP_534903.1">
    <property type="nucleotide sequence ID" value="NC_007928.1"/>
</dbReference>
<dbReference type="BMRB" id="P14319"/>
<dbReference type="SMR" id="P14319"/>
<dbReference type="TCDB" id="2.A.7.1.1">
    <property type="family name" value="the drug/metabolite transporter (dmt) superfamily"/>
</dbReference>
<dbReference type="GO" id="GO:0005886">
    <property type="term" value="C:plasma membrane"/>
    <property type="evidence" value="ECO:0007669"/>
    <property type="project" value="UniProtKB-SubCell"/>
</dbReference>
<dbReference type="GO" id="GO:0015199">
    <property type="term" value="F:amino-acid betaine transmembrane transporter activity"/>
    <property type="evidence" value="ECO:0007669"/>
    <property type="project" value="TreeGrafter"/>
</dbReference>
<dbReference type="GO" id="GO:0015297">
    <property type="term" value="F:antiporter activity"/>
    <property type="evidence" value="ECO:0007669"/>
    <property type="project" value="TreeGrafter"/>
</dbReference>
<dbReference type="GO" id="GO:0015220">
    <property type="term" value="F:choline transmembrane transporter activity"/>
    <property type="evidence" value="ECO:0007669"/>
    <property type="project" value="TreeGrafter"/>
</dbReference>
<dbReference type="GO" id="GO:0031460">
    <property type="term" value="P:glycine betaine transport"/>
    <property type="evidence" value="ECO:0007669"/>
    <property type="project" value="TreeGrafter"/>
</dbReference>
<dbReference type="FunFam" id="1.10.3730.20:FF:000001">
    <property type="entry name" value="Quaternary ammonium compound resistance transporter SugE"/>
    <property type="match status" value="1"/>
</dbReference>
<dbReference type="Gene3D" id="1.10.3730.20">
    <property type="match status" value="1"/>
</dbReference>
<dbReference type="InterPro" id="IPR000390">
    <property type="entry name" value="Small_drug/metabolite_transptr"/>
</dbReference>
<dbReference type="InterPro" id="IPR045324">
    <property type="entry name" value="Small_multidrug_res"/>
</dbReference>
<dbReference type="NCBIfam" id="NF000023">
    <property type="entry name" value="qac_SMR_C"/>
    <property type="match status" value="1"/>
</dbReference>
<dbReference type="NCBIfam" id="NF000384">
    <property type="entry name" value="QacCGHJ"/>
    <property type="match status" value="1"/>
</dbReference>
<dbReference type="PANTHER" id="PTHR30561:SF1">
    <property type="entry name" value="MULTIDRUG TRANSPORTER EMRE"/>
    <property type="match status" value="1"/>
</dbReference>
<dbReference type="PANTHER" id="PTHR30561">
    <property type="entry name" value="SMR FAMILY PROTON-DEPENDENT DRUG EFFLUX TRANSPORTER SUGE"/>
    <property type="match status" value="1"/>
</dbReference>
<dbReference type="Pfam" id="PF00893">
    <property type="entry name" value="Multi_Drug_Res"/>
    <property type="match status" value="1"/>
</dbReference>
<dbReference type="SUPFAM" id="SSF103481">
    <property type="entry name" value="Multidrug resistance efflux transporter EmrE"/>
    <property type="match status" value="1"/>
</dbReference>
<protein>
    <recommendedName>
        <fullName evidence="8">Quaternary ammonium compound-resistance protein QacC</fullName>
    </recommendedName>
    <alternativeName>
        <fullName>Ethidium bromide resistance protein</fullName>
    </alternativeName>
    <alternativeName>
        <fullName>Multidrug resistance protein</fullName>
    </alternativeName>
    <alternativeName>
        <fullName>Quaternary ammonium determinant C</fullName>
    </alternativeName>
</protein>
<keyword id="KW-1003">Cell membrane</keyword>
<keyword id="KW-0472">Membrane</keyword>
<keyword id="KW-0614">Plasmid</keyword>
<keyword id="KW-0812">Transmembrane</keyword>
<keyword id="KW-1133">Transmembrane helix</keyword>
<keyword id="KW-0813">Transport</keyword>
<feature type="chain" id="PRO_0000108083" description="Quaternary ammonium compound-resistance protein QacC">
    <location>
        <begin position="1"/>
        <end position="107"/>
    </location>
</feature>
<feature type="topological domain" description="Cytoplasmic" evidence="3">
    <location>
        <begin position="1"/>
        <end position="2"/>
    </location>
</feature>
<feature type="transmembrane region" description="Helical" evidence="1">
    <location>
        <begin position="3"/>
        <end position="20"/>
    </location>
</feature>
<feature type="topological domain" description="Extracellular" evidence="3">
    <location>
        <begin position="21"/>
        <end position="29"/>
    </location>
</feature>
<feature type="transmembrane region" description="Helical" evidence="1">
    <location>
        <begin position="30"/>
        <end position="47"/>
    </location>
</feature>
<feature type="topological domain" description="Cytoplasmic" evidence="3">
    <location>
        <begin position="48"/>
        <end position="56"/>
    </location>
</feature>
<feature type="transmembrane region" description="Helical" evidence="1">
    <location>
        <begin position="57"/>
        <end position="75"/>
    </location>
</feature>
<feature type="topological domain" description="Extracellular" evidence="3">
    <location>
        <begin position="76"/>
        <end position="85"/>
    </location>
</feature>
<feature type="transmembrane region" description="Helical" evidence="1">
    <location>
        <begin position="86"/>
        <end position="103"/>
    </location>
</feature>
<feature type="topological domain" description="Cytoplasmic" evidence="3">
    <location>
        <begin position="104"/>
        <end position="107"/>
    </location>
</feature>
<feature type="mutagenesis site" description="Decrease in resistance to ethidium bromide, but does not affect resistance to quaternary ammonium compounds." evidence="3">
    <original>P</original>
    <variation>A</variation>
    <variation>G</variation>
    <location>
        <position position="31"/>
    </location>
</feature>
<feature type="mutagenesis site" description="Decrease in resistance to ethidium bromide, but does not affect resistance to quaternary ammonium compounds." evidence="3">
    <original>C</original>
    <variation>A</variation>
    <variation>G</variation>
    <location>
        <position position="42"/>
    </location>
</feature>
<feature type="mutagenesis site" description="Confers sensitivity to ethidium bromide and quaternary ammonium compounds." evidence="3">
    <original>C</original>
    <variation>D</variation>
    <variation>E</variation>
    <variation>I</variation>
    <variation>K</variation>
    <variation>L</variation>
    <variation>P</variation>
    <variation>R</variation>
    <variation>V</variation>
    <location>
        <position position="42"/>
    </location>
</feature>
<feature type="mutagenesis site" description="Confers sensitivity to ethidium bromide, but does not affect resistance to quaternary ammonium compounds." evidence="3">
    <original>C</original>
    <variation>S</variation>
    <location>
        <position position="42"/>
    </location>
</feature>
<feature type="mutagenesis site" description="No change in activity." evidence="3">
    <original>C</original>
    <variation>T</variation>
    <location>
        <position position="42"/>
    </location>
</feature>
<feature type="mutagenesis site" description="Confers sensitivity to ethidium bromide and quaternary ammonium compounds." evidence="3">
    <original>Y</original>
    <variation>S</variation>
    <variation>W</variation>
    <location>
        <position position="59"/>
    </location>
</feature>
<feature type="mutagenesis site" description="Confers sensitivity to ethidium bromide and quaternary ammonium compounds." evidence="3">
    <original>W</original>
    <variation>F</variation>
    <variation>Y</variation>
    <location>
        <position position="62"/>
    </location>
</feature>
<organism>
    <name type="scientific">Staphylococcus aureus</name>
    <dbReference type="NCBI Taxonomy" id="1280"/>
    <lineage>
        <taxon>Bacteria</taxon>
        <taxon>Bacillati</taxon>
        <taxon>Bacillota</taxon>
        <taxon>Bacilli</taxon>
        <taxon>Bacillales</taxon>
        <taxon>Staphylococcaceae</taxon>
        <taxon>Staphylococcus</taxon>
    </lineage>
</organism>
<evidence type="ECO:0000255" key="1"/>
<evidence type="ECO:0000269" key="2">
    <source>
    </source>
</evidence>
<evidence type="ECO:0000269" key="3">
    <source>
    </source>
</evidence>
<evidence type="ECO:0000303" key="4">
    <source>
    </source>
</evidence>
<evidence type="ECO:0000303" key="5">
    <source>
    </source>
</evidence>
<evidence type="ECO:0000303" key="6">
    <source>
    </source>
</evidence>
<evidence type="ECO:0000303" key="7">
    <source>
    </source>
</evidence>
<evidence type="ECO:0000305" key="8"/>
<evidence type="ECO:0000305" key="9">
    <source>
    </source>
</evidence>
<name>QACC_STAAU</name>
<comment type="function">
    <text evidence="2 3 9">Multidrug exporter. Is implicated for the resistance to bacteriocidal quaternary ammonium compounds and ethidium bromide.</text>
</comment>
<comment type="activity regulation">
    <text evidence="3">Ethidium export is inhibited by N-ethylmaleimide (NEM).</text>
</comment>
<comment type="subcellular location">
    <subcellularLocation>
        <location evidence="3">Cell membrane</location>
        <topology evidence="3">Multi-pass membrane protein</topology>
    </subcellularLocation>
</comment>
<comment type="similarity">
    <text evidence="8">Belongs to the drug/metabolite transporter (DMT) superfamily. Small multidrug resistance (SMR) (TC 2.A.7.1) family.</text>
</comment>
<accession>P14319</accession>
<geneLocation type="plasmid">
    <name>pTZ20</name>
</geneLocation>
<geneLocation type="plasmid">
    <name>pWBG32</name>
</geneLocation>
<geneLocation type="plasmid">
    <name>pSK89</name>
</geneLocation>
<geneLocation type="plasmid">
    <name>pTZ22</name>
</geneLocation>
<geneLocation type="plasmid">
    <name>pKH8</name>
</geneLocation>
<sequence>MPYIYLIIAISTEVIGSAFLKSSEGFSKFIPSLGTIISFGICFYFLSKTMQHLPLNITYATWAGLGLVLTTVVSIIIFKEQINLITIVSIVLIIVGVVSLNIFGTSH</sequence>
<proteinExistence type="evidence at protein level"/>